<feature type="chain" id="PRO_0000200815" description="Uncharacterized protein y4cE">
    <location>
        <begin position="1"/>
        <end position="391"/>
    </location>
</feature>
<accession>P55387</accession>
<protein>
    <recommendedName>
        <fullName>Uncharacterized protein y4cE</fullName>
    </recommendedName>
</protein>
<gene>
    <name type="ordered locus">NGR_a00090</name>
    <name type="ORF">y4cE</name>
</gene>
<geneLocation type="plasmid">
    <name>sym pNGR234a</name>
</geneLocation>
<sequence length="391" mass="43362">MGLRDPGAKRACPTFAGRKRHVVKIDTNTFKFGFLNPQVRLYGYHQIRLVIRYGNIGRSTRLGRLLGKLSAAECDALDLELNKLRANESLDPQESELVLGRVLEPLFGIEGYEVEHTGGLNDQGIDFRASRTADETSSAPAETIGVQAKFYRKTVSRVGMADLQKLIGAALLQDLTRVVLVSNGEFPREAHAAVEKSLPLRIELLDIGGMRAWISRLREEKVDVEAEVRIMLRDLSSGLARLIAKSPDALDHLEWRMVEQVVAEVFEGLGFAVTLTPGSKDGGKDVILTCTVRGKLAEYYVEIKHWRSSTKVGSAAVEKLLKIIVEEKKDGGLFLSTYGFTSNAFEQLTTIAKHKLKFGDQEKIVTFCQTYVKAKAGLWSPPENLTEVLFA</sequence>
<keyword id="KW-0614">Plasmid</keyword>
<keyword id="KW-1185">Reference proteome</keyword>
<organism>
    <name type="scientific">Sinorhizobium fredii (strain NBRC 101917 / NGR234)</name>
    <dbReference type="NCBI Taxonomy" id="394"/>
    <lineage>
        <taxon>Bacteria</taxon>
        <taxon>Pseudomonadati</taxon>
        <taxon>Pseudomonadota</taxon>
        <taxon>Alphaproteobacteria</taxon>
        <taxon>Hyphomicrobiales</taxon>
        <taxon>Rhizobiaceae</taxon>
        <taxon>Sinorhizobium/Ensifer group</taxon>
        <taxon>Sinorhizobium</taxon>
    </lineage>
</organism>
<proteinExistence type="predicted"/>
<name>Y4CE_SINFN</name>
<dbReference type="EMBL" id="U00090">
    <property type="protein sequence ID" value="AAB91635.1"/>
    <property type="molecule type" value="Genomic_DNA"/>
</dbReference>
<dbReference type="PIR" id="T28632">
    <property type="entry name" value="T28632"/>
</dbReference>
<dbReference type="RefSeq" id="NP_443797.1">
    <property type="nucleotide sequence ID" value="NC_000914.2"/>
</dbReference>
<dbReference type="SMR" id="P55387"/>
<dbReference type="KEGG" id="rhi:NGR_a00090"/>
<dbReference type="PATRIC" id="fig|394.7.peg.7"/>
<dbReference type="eggNOG" id="COG1715">
    <property type="taxonomic scope" value="Bacteria"/>
</dbReference>
<dbReference type="eggNOG" id="COG1787">
    <property type="taxonomic scope" value="Bacteria"/>
</dbReference>
<dbReference type="HOGENOM" id="CLU_059375_0_0_5"/>
<dbReference type="OrthoDB" id="7062569at2"/>
<dbReference type="Proteomes" id="UP000001054">
    <property type="component" value="Plasmid pNGR234a"/>
</dbReference>
<dbReference type="GO" id="GO:0003677">
    <property type="term" value="F:DNA binding"/>
    <property type="evidence" value="ECO:0007669"/>
    <property type="project" value="InterPro"/>
</dbReference>
<dbReference type="GO" id="GO:0015666">
    <property type="term" value="F:restriction endodeoxyribonuclease activity"/>
    <property type="evidence" value="ECO:0007669"/>
    <property type="project" value="TreeGrafter"/>
</dbReference>
<dbReference type="GO" id="GO:0009307">
    <property type="term" value="P:DNA restriction-modification system"/>
    <property type="evidence" value="ECO:0007669"/>
    <property type="project" value="InterPro"/>
</dbReference>
<dbReference type="Gene3D" id="3.40.1350.10">
    <property type="match status" value="2"/>
</dbReference>
<dbReference type="InterPro" id="IPR011335">
    <property type="entry name" value="Restrct_endonuc-II-like"/>
</dbReference>
<dbReference type="InterPro" id="IPR007560">
    <property type="entry name" value="Restrct_endonuc_IV_Mrr"/>
</dbReference>
<dbReference type="InterPro" id="IPR011856">
    <property type="entry name" value="tRNA_endonuc-like_dom_sf"/>
</dbReference>
<dbReference type="InterPro" id="IPR052906">
    <property type="entry name" value="Type_IV_Methyl-Rstrct_Enzyme"/>
</dbReference>
<dbReference type="PANTHER" id="PTHR30015">
    <property type="entry name" value="MRR RESTRICTION SYSTEM PROTEIN"/>
    <property type="match status" value="1"/>
</dbReference>
<dbReference type="PANTHER" id="PTHR30015:SF7">
    <property type="entry name" value="TYPE IV METHYL-DIRECTED RESTRICTION ENZYME ECOKMRR"/>
    <property type="match status" value="1"/>
</dbReference>
<dbReference type="Pfam" id="PF04471">
    <property type="entry name" value="Mrr_cat"/>
    <property type="match status" value="2"/>
</dbReference>
<dbReference type="SUPFAM" id="SSF52980">
    <property type="entry name" value="Restriction endonuclease-like"/>
    <property type="match status" value="2"/>
</dbReference>
<reference key="1">
    <citation type="journal article" date="1997" name="Nature">
        <title>Molecular basis of symbiosis between Rhizobium and legumes.</title>
        <authorList>
            <person name="Freiberg C.A."/>
            <person name="Fellay R."/>
            <person name="Bairoch A."/>
            <person name="Broughton W.J."/>
            <person name="Rosenthal A."/>
            <person name="Perret X."/>
        </authorList>
    </citation>
    <scope>NUCLEOTIDE SEQUENCE [LARGE SCALE GENOMIC DNA]</scope>
    <source>
        <strain>NBRC 101917 / NGR234</strain>
    </source>
</reference>
<reference key="2">
    <citation type="journal article" date="2009" name="Appl. Environ. Microbiol.">
        <title>Rhizobium sp. strain NGR234 possesses a remarkable number of secretion systems.</title>
        <authorList>
            <person name="Schmeisser C."/>
            <person name="Liesegang H."/>
            <person name="Krysciak D."/>
            <person name="Bakkou N."/>
            <person name="Le Quere A."/>
            <person name="Wollherr A."/>
            <person name="Heinemeyer I."/>
            <person name="Morgenstern B."/>
            <person name="Pommerening-Roeser A."/>
            <person name="Flores M."/>
            <person name="Palacios R."/>
            <person name="Brenner S."/>
            <person name="Gottschalk G."/>
            <person name="Schmitz R.A."/>
            <person name="Broughton W.J."/>
            <person name="Perret X."/>
            <person name="Strittmatter A.W."/>
            <person name="Streit W.R."/>
        </authorList>
    </citation>
    <scope>NUCLEOTIDE SEQUENCE [LARGE SCALE GENOMIC DNA]</scope>
    <source>
        <strain>NBRC 101917 / NGR234</strain>
    </source>
</reference>